<dbReference type="EC" id="2.4.2.18" evidence="1"/>
<dbReference type="EMBL" id="BX950851">
    <property type="protein sequence ID" value="CAG75201.1"/>
    <property type="molecule type" value="Genomic_DNA"/>
</dbReference>
<dbReference type="SMR" id="Q6D4U2"/>
<dbReference type="STRING" id="218491.ECA2298"/>
<dbReference type="KEGG" id="eca:ECA2298"/>
<dbReference type="eggNOG" id="COG0547">
    <property type="taxonomic scope" value="Bacteria"/>
</dbReference>
<dbReference type="HOGENOM" id="CLU_034315_2_1_6"/>
<dbReference type="UniPathway" id="UPA00035">
    <property type="reaction ID" value="UER00041"/>
</dbReference>
<dbReference type="Proteomes" id="UP000007966">
    <property type="component" value="Chromosome"/>
</dbReference>
<dbReference type="GO" id="GO:0005829">
    <property type="term" value="C:cytosol"/>
    <property type="evidence" value="ECO:0007669"/>
    <property type="project" value="TreeGrafter"/>
</dbReference>
<dbReference type="GO" id="GO:0004048">
    <property type="term" value="F:anthranilate phosphoribosyltransferase activity"/>
    <property type="evidence" value="ECO:0007669"/>
    <property type="project" value="UniProtKB-UniRule"/>
</dbReference>
<dbReference type="GO" id="GO:0000287">
    <property type="term" value="F:magnesium ion binding"/>
    <property type="evidence" value="ECO:0007669"/>
    <property type="project" value="UniProtKB-UniRule"/>
</dbReference>
<dbReference type="GO" id="GO:0000162">
    <property type="term" value="P:L-tryptophan biosynthetic process"/>
    <property type="evidence" value="ECO:0007669"/>
    <property type="project" value="UniProtKB-UniRule"/>
</dbReference>
<dbReference type="FunFam" id="1.20.970.10:FF:000003">
    <property type="entry name" value="Anthranilate phosphoribosyltransferase"/>
    <property type="match status" value="1"/>
</dbReference>
<dbReference type="FunFam" id="3.40.1030.10:FF:000002">
    <property type="entry name" value="Anthranilate phosphoribosyltransferase"/>
    <property type="match status" value="1"/>
</dbReference>
<dbReference type="Gene3D" id="3.40.1030.10">
    <property type="entry name" value="Nucleoside phosphorylase/phosphoribosyltransferase catalytic domain"/>
    <property type="match status" value="1"/>
</dbReference>
<dbReference type="Gene3D" id="1.20.970.10">
    <property type="entry name" value="Transferase, Pyrimidine Nucleoside Phosphorylase, Chain C"/>
    <property type="match status" value="1"/>
</dbReference>
<dbReference type="HAMAP" id="MF_00211">
    <property type="entry name" value="TrpD"/>
    <property type="match status" value="1"/>
</dbReference>
<dbReference type="InterPro" id="IPR005940">
    <property type="entry name" value="Anthranilate_Pribosyl_Tfrase"/>
</dbReference>
<dbReference type="InterPro" id="IPR000312">
    <property type="entry name" value="Glycosyl_Trfase_fam3"/>
</dbReference>
<dbReference type="InterPro" id="IPR017459">
    <property type="entry name" value="Glycosyl_Trfase_fam3_N_dom"/>
</dbReference>
<dbReference type="InterPro" id="IPR036320">
    <property type="entry name" value="Glycosyl_Trfase_fam3_N_dom_sf"/>
</dbReference>
<dbReference type="InterPro" id="IPR035902">
    <property type="entry name" value="Nuc_phospho_transferase"/>
</dbReference>
<dbReference type="NCBIfam" id="TIGR01245">
    <property type="entry name" value="trpD"/>
    <property type="match status" value="1"/>
</dbReference>
<dbReference type="PANTHER" id="PTHR43285">
    <property type="entry name" value="ANTHRANILATE PHOSPHORIBOSYLTRANSFERASE"/>
    <property type="match status" value="1"/>
</dbReference>
<dbReference type="PANTHER" id="PTHR43285:SF2">
    <property type="entry name" value="ANTHRANILATE PHOSPHORIBOSYLTRANSFERASE"/>
    <property type="match status" value="1"/>
</dbReference>
<dbReference type="Pfam" id="PF02885">
    <property type="entry name" value="Glycos_trans_3N"/>
    <property type="match status" value="1"/>
</dbReference>
<dbReference type="Pfam" id="PF00591">
    <property type="entry name" value="Glycos_transf_3"/>
    <property type="match status" value="1"/>
</dbReference>
<dbReference type="SUPFAM" id="SSF52418">
    <property type="entry name" value="Nucleoside phosphorylase/phosphoribosyltransferase catalytic domain"/>
    <property type="match status" value="1"/>
</dbReference>
<dbReference type="SUPFAM" id="SSF47648">
    <property type="entry name" value="Nucleoside phosphorylase/phosphoribosyltransferase N-terminal domain"/>
    <property type="match status" value="1"/>
</dbReference>
<comment type="function">
    <text evidence="1">Catalyzes the transfer of the phosphoribosyl group of 5-phosphorylribose-1-pyrophosphate (PRPP) to anthranilate to yield N-(5'-phosphoribosyl)-anthranilate (PRA).</text>
</comment>
<comment type="catalytic activity">
    <reaction evidence="1">
        <text>N-(5-phospho-beta-D-ribosyl)anthranilate + diphosphate = 5-phospho-alpha-D-ribose 1-diphosphate + anthranilate</text>
        <dbReference type="Rhea" id="RHEA:11768"/>
        <dbReference type="ChEBI" id="CHEBI:16567"/>
        <dbReference type="ChEBI" id="CHEBI:18277"/>
        <dbReference type="ChEBI" id="CHEBI:33019"/>
        <dbReference type="ChEBI" id="CHEBI:58017"/>
        <dbReference type="EC" id="2.4.2.18"/>
    </reaction>
</comment>
<comment type="cofactor">
    <cofactor evidence="1">
        <name>Mg(2+)</name>
        <dbReference type="ChEBI" id="CHEBI:18420"/>
    </cofactor>
    <text evidence="1">Binds 2 magnesium ions per monomer.</text>
</comment>
<comment type="pathway">
    <text evidence="1">Amino-acid biosynthesis; L-tryptophan biosynthesis; L-tryptophan from chorismate: step 2/5.</text>
</comment>
<comment type="subunit">
    <text evidence="1">Homodimer.</text>
</comment>
<comment type="similarity">
    <text evidence="1">Belongs to the anthranilate phosphoribosyltransferase family.</text>
</comment>
<sequence length="355" mass="37837">MQLSSTQPSSKTQEPSTAQDVITMQHILEKLYGANSISRQESQALFGAIIRGELEASQLAAALISMKVRGEHPDEIAGAATALLADAQPFPRPDYLFADIVGTGGDGTNSINISTASAFVAASCGLKIAKHGNRSVSSRSGSSDLLSAFGIKLDMSAQDSRQALDDLGVCFLFAPQYHLGFRHAMPVRQQLKTRTVFNVLGPLVNPARPPLALIGVYSPELVRPIAETLKVLGYQRAAVVHGGGMDEVAIHAPTQVAELNHGEIETYELTHRDFGLDTHPLSALQGGTPEENRDILASLLQGKGERAHAAAVAANVALLLRLFGQEDLRQNAQQALEVIHSGQAYQRVIALSARG</sequence>
<organism>
    <name type="scientific">Pectobacterium atrosepticum (strain SCRI 1043 / ATCC BAA-672)</name>
    <name type="common">Erwinia carotovora subsp. atroseptica</name>
    <dbReference type="NCBI Taxonomy" id="218491"/>
    <lineage>
        <taxon>Bacteria</taxon>
        <taxon>Pseudomonadati</taxon>
        <taxon>Pseudomonadota</taxon>
        <taxon>Gammaproteobacteria</taxon>
        <taxon>Enterobacterales</taxon>
        <taxon>Pectobacteriaceae</taxon>
        <taxon>Pectobacterium</taxon>
    </lineage>
</organism>
<evidence type="ECO:0000255" key="1">
    <source>
        <dbReference type="HAMAP-Rule" id="MF_00211"/>
    </source>
</evidence>
<keyword id="KW-0028">Amino-acid biosynthesis</keyword>
<keyword id="KW-0057">Aromatic amino acid biosynthesis</keyword>
<keyword id="KW-0328">Glycosyltransferase</keyword>
<keyword id="KW-0460">Magnesium</keyword>
<keyword id="KW-0479">Metal-binding</keyword>
<keyword id="KW-1185">Reference proteome</keyword>
<keyword id="KW-0808">Transferase</keyword>
<keyword id="KW-0822">Tryptophan biosynthesis</keyword>
<accession>Q6D4U2</accession>
<feature type="chain" id="PRO_0000227156" description="Anthranilate phosphoribosyltransferase">
    <location>
        <begin position="1"/>
        <end position="355"/>
    </location>
</feature>
<feature type="binding site" evidence="1">
    <location>
        <position position="102"/>
    </location>
    <ligand>
        <name>5-phospho-alpha-D-ribose 1-diphosphate</name>
        <dbReference type="ChEBI" id="CHEBI:58017"/>
    </ligand>
</feature>
<feature type="binding site" evidence="1">
    <location>
        <position position="102"/>
    </location>
    <ligand>
        <name>anthranilate</name>
        <dbReference type="ChEBI" id="CHEBI:16567"/>
        <label>1</label>
    </ligand>
</feature>
<feature type="binding site" evidence="1">
    <location>
        <begin position="105"/>
        <end position="106"/>
    </location>
    <ligand>
        <name>5-phospho-alpha-D-ribose 1-diphosphate</name>
        <dbReference type="ChEBI" id="CHEBI:58017"/>
    </ligand>
</feature>
<feature type="binding site" evidence="1">
    <location>
        <position position="110"/>
    </location>
    <ligand>
        <name>5-phospho-alpha-D-ribose 1-diphosphate</name>
        <dbReference type="ChEBI" id="CHEBI:58017"/>
    </ligand>
</feature>
<feature type="binding site" evidence="1">
    <location>
        <begin position="112"/>
        <end position="115"/>
    </location>
    <ligand>
        <name>5-phospho-alpha-D-ribose 1-diphosphate</name>
        <dbReference type="ChEBI" id="CHEBI:58017"/>
    </ligand>
</feature>
<feature type="binding site" evidence="1">
    <location>
        <position position="114"/>
    </location>
    <ligand>
        <name>Mg(2+)</name>
        <dbReference type="ChEBI" id="CHEBI:18420"/>
        <label>1</label>
    </ligand>
</feature>
<feature type="binding site" evidence="1">
    <location>
        <begin position="130"/>
        <end position="138"/>
    </location>
    <ligand>
        <name>5-phospho-alpha-D-ribose 1-diphosphate</name>
        <dbReference type="ChEBI" id="CHEBI:58017"/>
    </ligand>
</feature>
<feature type="binding site" evidence="1">
    <location>
        <position position="133"/>
    </location>
    <ligand>
        <name>anthranilate</name>
        <dbReference type="ChEBI" id="CHEBI:16567"/>
        <label>1</label>
    </ligand>
</feature>
<feature type="binding site" evidence="1">
    <location>
        <position position="142"/>
    </location>
    <ligand>
        <name>5-phospho-alpha-D-ribose 1-diphosphate</name>
        <dbReference type="ChEBI" id="CHEBI:58017"/>
    </ligand>
</feature>
<feature type="binding site" evidence="1">
    <location>
        <position position="188"/>
    </location>
    <ligand>
        <name>anthranilate</name>
        <dbReference type="ChEBI" id="CHEBI:16567"/>
        <label>2</label>
    </ligand>
</feature>
<feature type="binding site" evidence="1">
    <location>
        <position position="246"/>
    </location>
    <ligand>
        <name>Mg(2+)</name>
        <dbReference type="ChEBI" id="CHEBI:18420"/>
        <label>2</label>
    </ligand>
</feature>
<feature type="binding site" evidence="1">
    <location>
        <position position="247"/>
    </location>
    <ligand>
        <name>Mg(2+)</name>
        <dbReference type="ChEBI" id="CHEBI:18420"/>
        <label>1</label>
    </ligand>
</feature>
<feature type="binding site" evidence="1">
    <location>
        <position position="247"/>
    </location>
    <ligand>
        <name>Mg(2+)</name>
        <dbReference type="ChEBI" id="CHEBI:18420"/>
        <label>2</label>
    </ligand>
</feature>
<reference key="1">
    <citation type="journal article" date="2004" name="Proc. Natl. Acad. Sci. U.S.A.">
        <title>Genome sequence of the enterobacterial phytopathogen Erwinia carotovora subsp. atroseptica and characterization of virulence factors.</title>
        <authorList>
            <person name="Bell K.S."/>
            <person name="Sebaihia M."/>
            <person name="Pritchard L."/>
            <person name="Holden M.T.G."/>
            <person name="Hyman L.J."/>
            <person name="Holeva M.C."/>
            <person name="Thomson N.R."/>
            <person name="Bentley S.D."/>
            <person name="Churcher L.J.C."/>
            <person name="Mungall K."/>
            <person name="Atkin R."/>
            <person name="Bason N."/>
            <person name="Brooks K."/>
            <person name="Chillingworth T."/>
            <person name="Clark K."/>
            <person name="Doggett J."/>
            <person name="Fraser A."/>
            <person name="Hance Z."/>
            <person name="Hauser H."/>
            <person name="Jagels K."/>
            <person name="Moule S."/>
            <person name="Norbertczak H."/>
            <person name="Ormond D."/>
            <person name="Price C."/>
            <person name="Quail M.A."/>
            <person name="Sanders M."/>
            <person name="Walker D."/>
            <person name="Whitehead S."/>
            <person name="Salmond G.P.C."/>
            <person name="Birch P.R.J."/>
            <person name="Parkhill J."/>
            <person name="Toth I.K."/>
        </authorList>
    </citation>
    <scope>NUCLEOTIDE SEQUENCE [LARGE SCALE GENOMIC DNA]</scope>
    <source>
        <strain>SCRI 1043 / ATCC BAA-672</strain>
    </source>
</reference>
<protein>
    <recommendedName>
        <fullName evidence="1">Anthranilate phosphoribosyltransferase</fullName>
        <ecNumber evidence="1">2.4.2.18</ecNumber>
    </recommendedName>
</protein>
<name>TRPD_PECAS</name>
<gene>
    <name evidence="1" type="primary">trpD</name>
    <name type="ordered locus">ECA2298</name>
</gene>
<proteinExistence type="inferred from homology"/>